<reference key="1">
    <citation type="journal article" date="2001" name="Gene">
        <title>Full-sized RanBPM cDNA encodes a protein possessing a long stretch of proline and glutamine within the N-terminal region, comprising a large protein complex.</title>
        <authorList>
            <person name="Nishitani H."/>
            <person name="Hirose E."/>
            <person name="Uchimura Y."/>
            <person name="Nakamura M."/>
            <person name="Umeda M."/>
            <person name="Nishii K."/>
            <person name="Mori N."/>
            <person name="Nishimoto T."/>
        </authorList>
    </citation>
    <scope>NUCLEOTIDE SEQUENCE [MRNA] (ISOFORM 1)</scope>
    <scope>SUBCELLULAR LOCATION</scope>
    <scope>INTERACTION WITH RAN</scope>
</reference>
<reference key="2">
    <citation type="journal article" date="2004" name="Nat. Genet.">
        <title>Complete sequencing and characterization of 21,243 full-length human cDNAs.</title>
        <authorList>
            <person name="Ota T."/>
            <person name="Suzuki Y."/>
            <person name="Nishikawa T."/>
            <person name="Otsuki T."/>
            <person name="Sugiyama T."/>
            <person name="Irie R."/>
            <person name="Wakamatsu A."/>
            <person name="Hayashi K."/>
            <person name="Sato H."/>
            <person name="Nagai K."/>
            <person name="Kimura K."/>
            <person name="Makita H."/>
            <person name="Sekine M."/>
            <person name="Obayashi M."/>
            <person name="Nishi T."/>
            <person name="Shibahara T."/>
            <person name="Tanaka T."/>
            <person name="Ishii S."/>
            <person name="Yamamoto J."/>
            <person name="Saito K."/>
            <person name="Kawai Y."/>
            <person name="Isono Y."/>
            <person name="Nakamura Y."/>
            <person name="Nagahari K."/>
            <person name="Murakami K."/>
            <person name="Yasuda T."/>
            <person name="Iwayanagi T."/>
            <person name="Wagatsuma M."/>
            <person name="Shiratori A."/>
            <person name="Sudo H."/>
            <person name="Hosoiri T."/>
            <person name="Kaku Y."/>
            <person name="Kodaira H."/>
            <person name="Kondo H."/>
            <person name="Sugawara M."/>
            <person name="Takahashi M."/>
            <person name="Kanda K."/>
            <person name="Yokoi T."/>
            <person name="Furuya T."/>
            <person name="Kikkawa E."/>
            <person name="Omura Y."/>
            <person name="Abe K."/>
            <person name="Kamihara K."/>
            <person name="Katsuta N."/>
            <person name="Sato K."/>
            <person name="Tanikawa M."/>
            <person name="Yamazaki M."/>
            <person name="Ninomiya K."/>
            <person name="Ishibashi T."/>
            <person name="Yamashita H."/>
            <person name="Murakawa K."/>
            <person name="Fujimori K."/>
            <person name="Tanai H."/>
            <person name="Kimata M."/>
            <person name="Watanabe M."/>
            <person name="Hiraoka S."/>
            <person name="Chiba Y."/>
            <person name="Ishida S."/>
            <person name="Ono Y."/>
            <person name="Takiguchi S."/>
            <person name="Watanabe S."/>
            <person name="Yosida M."/>
            <person name="Hotuta T."/>
            <person name="Kusano J."/>
            <person name="Kanehori K."/>
            <person name="Takahashi-Fujii A."/>
            <person name="Hara H."/>
            <person name="Tanase T.-O."/>
            <person name="Nomura Y."/>
            <person name="Togiya S."/>
            <person name="Komai F."/>
            <person name="Hara R."/>
            <person name="Takeuchi K."/>
            <person name="Arita M."/>
            <person name="Imose N."/>
            <person name="Musashino K."/>
            <person name="Yuuki H."/>
            <person name="Oshima A."/>
            <person name="Sasaki N."/>
            <person name="Aotsuka S."/>
            <person name="Yoshikawa Y."/>
            <person name="Matsunawa H."/>
            <person name="Ichihara T."/>
            <person name="Shiohata N."/>
            <person name="Sano S."/>
            <person name="Moriya S."/>
            <person name="Momiyama H."/>
            <person name="Satoh N."/>
            <person name="Takami S."/>
            <person name="Terashima Y."/>
            <person name="Suzuki O."/>
            <person name="Nakagawa S."/>
            <person name="Senoh A."/>
            <person name="Mizoguchi H."/>
            <person name="Goto Y."/>
            <person name="Shimizu F."/>
            <person name="Wakebe H."/>
            <person name="Hishigaki H."/>
            <person name="Watanabe T."/>
            <person name="Sugiyama A."/>
            <person name="Takemoto M."/>
            <person name="Kawakami B."/>
            <person name="Yamazaki M."/>
            <person name="Watanabe K."/>
            <person name="Kumagai A."/>
            <person name="Itakura S."/>
            <person name="Fukuzumi Y."/>
            <person name="Fujimori Y."/>
            <person name="Komiyama M."/>
            <person name="Tashiro H."/>
            <person name="Tanigami A."/>
            <person name="Fujiwara T."/>
            <person name="Ono T."/>
            <person name="Yamada K."/>
            <person name="Fujii Y."/>
            <person name="Ozaki K."/>
            <person name="Hirao M."/>
            <person name="Ohmori Y."/>
            <person name="Kawabata A."/>
            <person name="Hikiji T."/>
            <person name="Kobatake N."/>
            <person name="Inagaki H."/>
            <person name="Ikema Y."/>
            <person name="Okamoto S."/>
            <person name="Okitani R."/>
            <person name="Kawakami T."/>
            <person name="Noguchi S."/>
            <person name="Itoh T."/>
            <person name="Shigeta K."/>
            <person name="Senba T."/>
            <person name="Matsumura K."/>
            <person name="Nakajima Y."/>
            <person name="Mizuno T."/>
            <person name="Morinaga M."/>
            <person name="Sasaki M."/>
            <person name="Togashi T."/>
            <person name="Oyama M."/>
            <person name="Hata H."/>
            <person name="Watanabe M."/>
            <person name="Komatsu T."/>
            <person name="Mizushima-Sugano J."/>
            <person name="Satoh T."/>
            <person name="Shirai Y."/>
            <person name="Takahashi Y."/>
            <person name="Nakagawa K."/>
            <person name="Okumura K."/>
            <person name="Nagase T."/>
            <person name="Nomura N."/>
            <person name="Kikuchi H."/>
            <person name="Masuho Y."/>
            <person name="Yamashita R."/>
            <person name="Nakai K."/>
            <person name="Yada T."/>
            <person name="Nakamura Y."/>
            <person name="Ohara O."/>
            <person name="Isogai T."/>
            <person name="Sugano S."/>
        </authorList>
    </citation>
    <scope>NUCLEOTIDE SEQUENCE [LARGE SCALE MRNA] (ISOFORM 3)</scope>
    <source>
        <tissue>Testis</tissue>
    </source>
</reference>
<reference key="3">
    <citation type="journal article" date="2003" name="Nature">
        <title>The DNA sequence and analysis of human chromosome 6.</title>
        <authorList>
            <person name="Mungall A.J."/>
            <person name="Palmer S.A."/>
            <person name="Sims S.K."/>
            <person name="Edwards C.A."/>
            <person name="Ashurst J.L."/>
            <person name="Wilming L."/>
            <person name="Jones M.C."/>
            <person name="Horton R."/>
            <person name="Hunt S.E."/>
            <person name="Scott C.E."/>
            <person name="Gilbert J.G.R."/>
            <person name="Clamp M.E."/>
            <person name="Bethel G."/>
            <person name="Milne S."/>
            <person name="Ainscough R."/>
            <person name="Almeida J.P."/>
            <person name="Ambrose K.D."/>
            <person name="Andrews T.D."/>
            <person name="Ashwell R.I.S."/>
            <person name="Babbage A.K."/>
            <person name="Bagguley C.L."/>
            <person name="Bailey J."/>
            <person name="Banerjee R."/>
            <person name="Barker D.J."/>
            <person name="Barlow K.F."/>
            <person name="Bates K."/>
            <person name="Beare D.M."/>
            <person name="Beasley H."/>
            <person name="Beasley O."/>
            <person name="Bird C.P."/>
            <person name="Blakey S.E."/>
            <person name="Bray-Allen S."/>
            <person name="Brook J."/>
            <person name="Brown A.J."/>
            <person name="Brown J.Y."/>
            <person name="Burford D.C."/>
            <person name="Burrill W."/>
            <person name="Burton J."/>
            <person name="Carder C."/>
            <person name="Carter N.P."/>
            <person name="Chapman J.C."/>
            <person name="Clark S.Y."/>
            <person name="Clark G."/>
            <person name="Clee C.M."/>
            <person name="Clegg S."/>
            <person name="Cobley V."/>
            <person name="Collier R.E."/>
            <person name="Collins J.E."/>
            <person name="Colman L.K."/>
            <person name="Corby N.R."/>
            <person name="Coville G.J."/>
            <person name="Culley K.M."/>
            <person name="Dhami P."/>
            <person name="Davies J."/>
            <person name="Dunn M."/>
            <person name="Earthrowl M.E."/>
            <person name="Ellington A.E."/>
            <person name="Evans K.A."/>
            <person name="Faulkner L."/>
            <person name="Francis M.D."/>
            <person name="Frankish A."/>
            <person name="Frankland J."/>
            <person name="French L."/>
            <person name="Garner P."/>
            <person name="Garnett J."/>
            <person name="Ghori M.J."/>
            <person name="Gilby L.M."/>
            <person name="Gillson C.J."/>
            <person name="Glithero R.J."/>
            <person name="Grafham D.V."/>
            <person name="Grant M."/>
            <person name="Gribble S."/>
            <person name="Griffiths C."/>
            <person name="Griffiths M.N.D."/>
            <person name="Hall R."/>
            <person name="Halls K.S."/>
            <person name="Hammond S."/>
            <person name="Harley J.L."/>
            <person name="Hart E.A."/>
            <person name="Heath P.D."/>
            <person name="Heathcott R."/>
            <person name="Holmes S.J."/>
            <person name="Howden P.J."/>
            <person name="Howe K.L."/>
            <person name="Howell G.R."/>
            <person name="Huckle E."/>
            <person name="Humphray S.J."/>
            <person name="Humphries M.D."/>
            <person name="Hunt A.R."/>
            <person name="Johnson C.M."/>
            <person name="Joy A.A."/>
            <person name="Kay M."/>
            <person name="Keenan S.J."/>
            <person name="Kimberley A.M."/>
            <person name="King A."/>
            <person name="Laird G.K."/>
            <person name="Langford C."/>
            <person name="Lawlor S."/>
            <person name="Leongamornlert D.A."/>
            <person name="Leversha M."/>
            <person name="Lloyd C.R."/>
            <person name="Lloyd D.M."/>
            <person name="Loveland J.E."/>
            <person name="Lovell J."/>
            <person name="Martin S."/>
            <person name="Mashreghi-Mohammadi M."/>
            <person name="Maslen G.L."/>
            <person name="Matthews L."/>
            <person name="McCann O.T."/>
            <person name="McLaren S.J."/>
            <person name="McLay K."/>
            <person name="McMurray A."/>
            <person name="Moore M.J.F."/>
            <person name="Mullikin J.C."/>
            <person name="Niblett D."/>
            <person name="Nickerson T."/>
            <person name="Novik K.L."/>
            <person name="Oliver K."/>
            <person name="Overton-Larty E.K."/>
            <person name="Parker A."/>
            <person name="Patel R."/>
            <person name="Pearce A.V."/>
            <person name="Peck A.I."/>
            <person name="Phillimore B.J.C.T."/>
            <person name="Phillips S."/>
            <person name="Plumb R.W."/>
            <person name="Porter K.M."/>
            <person name="Ramsey Y."/>
            <person name="Ranby S.A."/>
            <person name="Rice C.M."/>
            <person name="Ross M.T."/>
            <person name="Searle S.M."/>
            <person name="Sehra H.K."/>
            <person name="Sheridan E."/>
            <person name="Skuce C.D."/>
            <person name="Smith S."/>
            <person name="Smith M."/>
            <person name="Spraggon L."/>
            <person name="Squares S.L."/>
            <person name="Steward C.A."/>
            <person name="Sycamore N."/>
            <person name="Tamlyn-Hall G."/>
            <person name="Tester J."/>
            <person name="Theaker A.J."/>
            <person name="Thomas D.W."/>
            <person name="Thorpe A."/>
            <person name="Tracey A."/>
            <person name="Tromans A."/>
            <person name="Tubby B."/>
            <person name="Wall M."/>
            <person name="Wallis J.M."/>
            <person name="West A.P."/>
            <person name="White S.S."/>
            <person name="Whitehead S.L."/>
            <person name="Whittaker H."/>
            <person name="Wild A."/>
            <person name="Willey D.J."/>
            <person name="Wilmer T.E."/>
            <person name="Wood J.M."/>
            <person name="Wray P.W."/>
            <person name="Wyatt J.C."/>
            <person name="Young L."/>
            <person name="Younger R.M."/>
            <person name="Bentley D.R."/>
            <person name="Coulson A."/>
            <person name="Durbin R.M."/>
            <person name="Hubbard T."/>
            <person name="Sulston J.E."/>
            <person name="Dunham I."/>
            <person name="Rogers J."/>
            <person name="Beck S."/>
        </authorList>
    </citation>
    <scope>NUCLEOTIDE SEQUENCE [LARGE SCALE GENOMIC DNA]</scope>
</reference>
<reference key="4">
    <citation type="journal article" date="2004" name="Genome Res.">
        <title>The status, quality, and expansion of the NIH full-length cDNA project: the Mammalian Gene Collection (MGC).</title>
        <authorList>
            <consortium name="The MGC Project Team"/>
        </authorList>
    </citation>
    <scope>NUCLEOTIDE SEQUENCE [LARGE SCALE MRNA] (ISOFORMS 1 AND 2)</scope>
    <source>
        <tissue>Lymph</tissue>
        <tissue>Spinal ganglion</tissue>
        <tissue>Testis</tissue>
    </source>
</reference>
<reference key="5">
    <citation type="journal article" date="1998" name="J. Cell Biol.">
        <title>When overexpressed, a novel centrosomal protein, RanBPM, causes ectopic microtubule nucleation similar to gamma-tubulin.</title>
        <authorList>
            <person name="Nakamura M."/>
            <person name="Masuda H."/>
            <person name="Horii J."/>
            <person name="Kuma K."/>
            <person name="Yokoyama N."/>
            <person name="Ohba T."/>
            <person name="Nishitani H."/>
            <person name="Miyata T."/>
            <person name="Tanaka M."/>
            <person name="Nishimoto T."/>
        </authorList>
    </citation>
    <scope>NUCLEOTIDE SEQUENCE [MRNA] OF 85-729 (ISOFORM 1)</scope>
    <scope>INTERACTION WITH RAN</scope>
</reference>
<reference key="6">
    <citation type="journal article" date="2002" name="Biochem. Biophys. Res. Commun.">
        <title>HIPK2 associates with RanBPM.</title>
        <authorList>
            <person name="Wang Y."/>
            <person name="Marion Schneider E."/>
            <person name="Li X."/>
            <person name="Duttenhoefer I."/>
            <person name="Debatin K.-M."/>
            <person name="Hug H."/>
        </authorList>
    </citation>
    <scope>NUCLEOTIDE SEQUENCE [MRNA] OF 136-729 (ISOFORM 1)</scope>
    <scope>INTERACTION WITH HIPK2</scope>
    <scope>SUBCELLULAR LOCATION</scope>
</reference>
<reference key="7">
    <citation type="journal article" date="2002" name="J. Biol. Chem.">
        <title>RanBPM, a nuclear protein that interacts with and regulates transcriptional activity of androgen receptor and glucocorticoid receptor.</title>
        <authorList>
            <person name="Rao M.A."/>
            <person name="Cheng H."/>
            <person name="Quayle A.N."/>
            <person name="Nishitani H."/>
            <person name="Nelson C.C."/>
            <person name="Rennie P.S."/>
        </authorList>
    </citation>
    <scope>NUCLEOTIDE SEQUENCE [MRNA] OF 148-729 (ISOFORM 1)</scope>
    <scope>FUNCTION</scope>
    <scope>TISSUE SPECIFICITY</scope>
    <scope>INTERACTION WITH AR</scope>
    <source>
        <tissue>Prostate</tissue>
    </source>
</reference>
<reference key="8">
    <citation type="journal article" date="2002" name="Biochem. J.">
        <title>Structural and functional characterization of the USP11 deubiquitinating enzyme, which interacts with the RanGTP-associated protein RanBPM.</title>
        <authorList>
            <person name="Ideguchi H."/>
            <person name="Ueda A."/>
            <person name="Tanaka M."/>
            <person name="Yang J."/>
            <person name="Tsuji T."/>
            <person name="Ohno S."/>
            <person name="Hagiwara E."/>
            <person name="Aoki A."/>
            <person name="Ishigatsubo Y."/>
        </authorList>
    </citation>
    <scope>INTERACTION WITH USP11</scope>
    <scope>UBIQUITINATION</scope>
</reference>
<reference key="9">
    <citation type="journal article" date="2002" name="BMC Cancer">
        <title>RanBPM interacts with psoriasin in vitro and their expression correlates with specific clinical features in vivo in breast cancer.</title>
        <authorList>
            <person name="Emberley E.D."/>
            <person name="Gietz R.D."/>
            <person name="Campbell J.D."/>
            <person name="Hayglass K.T."/>
            <person name="Murphy L.C."/>
            <person name="Watson P.H."/>
        </authorList>
    </citation>
    <scope>INTERACTION WITH S100A7</scope>
</reference>
<reference key="10">
    <citation type="journal article" date="2002" name="J. Biol. Chem.">
        <title>Activation of Ras/Erk pathway by a novel MET-interacting protein RanBPM.</title>
        <authorList>
            <person name="Wang D."/>
            <person name="Li Z."/>
            <person name="Messing E.M."/>
            <person name="Wu G."/>
        </authorList>
    </citation>
    <scope>FUNCTION IN RAS SIGNALING</scope>
    <scope>INTERACTION WITH MET AND SOS</scope>
    <scope>TISSUE SPECIFICITY</scope>
</reference>
<reference key="11">
    <citation type="journal article" date="2003" name="Biochem. Biophys. Res. Commun.">
        <title>Calbindin D28K interacts with Ran-binding protein M: identification of interacting domains by NMR spectroscopy.</title>
        <authorList>
            <person name="Lutz W."/>
            <person name="Frank E.M."/>
            <person name="Craig T.A."/>
            <person name="Thompson R."/>
            <person name="Venters R.A."/>
            <person name="Kojetin D."/>
            <person name="Cavanagh J."/>
            <person name="Kumar R."/>
        </authorList>
    </citation>
    <scope>INTERACTION WITH CALB1</scope>
</reference>
<reference key="12">
    <citation type="journal article" date="2003" name="Biochem. Biophys. Res. Commun.">
        <title>The cyclin-dependent kinase 11(p46) isoform interacts with RanBPM.</title>
        <authorList>
            <person name="Mikolajczyk M."/>
            <person name="Shi J."/>
            <person name="Vaillancourt R.R."/>
            <person name="Sachs N.A."/>
            <person name="Nelson M."/>
        </authorList>
    </citation>
    <scope>INTERACTION WITH CDC2L1</scope>
    <scope>PHOSPHORYLATION</scope>
    <scope>SUBCELLULAR LOCATION</scope>
</reference>
<reference key="13">
    <citation type="journal article" date="2003" name="Gene">
        <title>A novel nuclear protein, Twa1, and Muskelin comprise a complex with RanBPM.</title>
        <authorList>
            <person name="Umeda M."/>
            <person name="Nishitani H."/>
            <person name="Nishimoto T."/>
        </authorList>
    </citation>
    <scope>INTERACTION WITH MKLN1 AND GID8</scope>
    <scope>IDENTIFICATION IN A COMPLEX WITH MKLN1 AND GID8</scope>
</reference>
<reference key="14">
    <citation type="journal article" date="2003" name="J. Biol. Chem.">
        <title>Serine/threonine kinase Mirk/Dyrk1B is an inhibitor of epithelial cell migration and is negatively regulated by the Met adaptor Ran-binding protein M.</title>
        <authorList>
            <person name="Zou Y."/>
            <person name="Lim S."/>
            <person name="Lee K."/>
            <person name="Deng X."/>
            <person name="Friedman E."/>
        </authorList>
    </citation>
    <scope>FUNCTION</scope>
    <scope>INTERACTION WITH DYRK1A AND DYRK1B</scope>
    <scope>IDENTIFICATION IN A COMPLEX WITH RAN; DYRK1B AND COPS5</scope>
</reference>
<reference key="15">
    <citation type="journal article" date="2004" name="Biochem. Biophys. Res. Commun.">
        <title>A novel MET-interacting protein shares high sequence similarity with RanBPM, but fails to stimulate MET-induced Ras/Erk signaling.</title>
        <authorList>
            <person name="Wang D."/>
            <person name="Li Z."/>
            <person name="Schoen S.R."/>
            <person name="Messing E.M."/>
            <person name="Wu G."/>
        </authorList>
    </citation>
    <scope>INTERACTION WITH RAN AND MET</scope>
</reference>
<reference key="16">
    <citation type="journal article" date="2004" name="J. Biol. Chem.">
        <title>RanBPM is a phosphoprotein that associates with the plasma membrane and interacts with the integrin LFA-1.</title>
        <authorList>
            <person name="Denti S."/>
            <person name="Sirri A."/>
            <person name="Cheli A."/>
            <person name="Rogge L."/>
            <person name="Innamorati G."/>
            <person name="Putignano S."/>
            <person name="Fabbri M."/>
            <person name="Pardi R."/>
            <person name="Bianchi E."/>
        </authorList>
    </citation>
    <scope>FUNCTION</scope>
    <scope>INTERACTION WITH ITGB1 AND ITGB2</scope>
    <scope>SUBCELLULAR LOCATION</scope>
    <scope>PHOSPHORYLATION</scope>
</reference>
<reference key="17">
    <citation type="journal article" date="2004" name="J. Mol. Biol.">
        <title>The C-terminus of fragile X mental retardation protein interacts with the multi-domain Ran-binding protein in the microtubule-organising centre.</title>
        <authorList>
            <person name="Menon R.P."/>
            <person name="Gibson T.J."/>
            <person name="Pastore A."/>
        </authorList>
    </citation>
    <scope>FUNCTION</scope>
    <scope>INTERACTION WITH FMR1</scope>
    <scope>TISSUE SPECIFICITY</scope>
    <scope>SUBCELLULAR LOCATION</scope>
</reference>
<reference key="18">
    <citation type="journal article" date="2005" name="Oncogene">
        <title>Protein stability and function of p73 are modulated by a physical interaction with RanBPM in mammalian cultured cells.</title>
        <authorList>
            <person name="Kramer S."/>
            <person name="Ozaki T."/>
            <person name="Miyazaki K."/>
            <person name="Kato C."/>
            <person name="Hanamoto T."/>
            <person name="Nakagawara A."/>
        </authorList>
    </citation>
    <scope>FUNCTION</scope>
    <scope>SUBCELLULAR LOCATION</scope>
    <scope>INTERACTION WITH TP73</scope>
</reference>
<reference key="19">
    <citation type="journal article" date="2007" name="Gene">
        <title>RanBPM, Muskelin, p48EMLP, p44CTLH, and the armadillo-repeat proteins ARMC8alpha and ARMC8beta are components of the CTLH complex.</title>
        <authorList>
            <person name="Kobayashi N."/>
            <person name="Yang J."/>
            <person name="Ueda A."/>
            <person name="Suzuki T."/>
            <person name="Tomaru K."/>
            <person name="Takeno M."/>
            <person name="Okuda K."/>
            <person name="Ishigatsubo Y."/>
        </authorList>
    </citation>
    <scope>IDENTIFICATION IN THE CTLH COMPLEX</scope>
    <scope>SUBCELLULAR LOCATION</scope>
</reference>
<reference key="20">
    <citation type="journal article" date="2007" name="Science">
        <title>ATM and ATR substrate analysis reveals extensive protein networks responsive to DNA damage.</title>
        <authorList>
            <person name="Matsuoka S."/>
            <person name="Ballif B.A."/>
            <person name="Smogorzewska A."/>
            <person name="McDonald E.R. III"/>
            <person name="Hurov K.E."/>
            <person name="Luo J."/>
            <person name="Bakalarski C.E."/>
            <person name="Zhao Z."/>
            <person name="Solimini N."/>
            <person name="Lerenthal Y."/>
            <person name="Shiloh Y."/>
            <person name="Gygi S.P."/>
            <person name="Elledge S.J."/>
        </authorList>
    </citation>
    <scope>IDENTIFICATION BY MASS SPECTROMETRY [LARGE SCALE ANALYSIS]</scope>
    <source>
        <tissue>Embryonic kidney</tissue>
    </source>
</reference>
<reference key="21">
    <citation type="journal article" date="2008" name="Biochem. Biophys. Res. Commun.">
        <title>RanBP10 acts as a novel coactivator for the androgen receptor.</title>
        <authorList>
            <person name="Harada N."/>
            <person name="Yokoyama T."/>
            <person name="Yamaji R."/>
            <person name="Nakano Y."/>
            <person name="Inui H."/>
        </authorList>
    </citation>
    <scope>FUNCTION</scope>
    <scope>INTERACTION WITH RANBP10</scope>
    <scope>SUBCELLULAR LOCATION</scope>
</reference>
<reference key="22">
    <citation type="journal article" date="2008" name="J. Cell Biol.">
        <title>Novel role of the muskelin-RanBP9 complex as a nucleocytoplasmic mediator of cell morphology regulation.</title>
        <authorList>
            <person name="Valiyaveettil M."/>
            <person name="Bentley A.A."/>
            <person name="Gursahaney P."/>
            <person name="Hussien R."/>
            <person name="Chakravarti R."/>
            <person name="Kureishy N."/>
            <person name="Prag S."/>
            <person name="Adams J.C."/>
        </authorList>
    </citation>
    <scope>FUNCTION</scope>
    <scope>INTERACTION WITH MKLN1</scope>
</reference>
<reference key="23">
    <citation type="journal article" date="2008" name="Proc. Natl. Acad. Sci. U.S.A.">
        <title>A quantitative atlas of mitotic phosphorylation.</title>
        <authorList>
            <person name="Dephoure N."/>
            <person name="Zhou C."/>
            <person name="Villen J."/>
            <person name="Beausoleil S.A."/>
            <person name="Bakalarski C.E."/>
            <person name="Elledge S.J."/>
            <person name="Gygi S.P."/>
        </authorList>
    </citation>
    <scope>PHOSPHORYLATION [LARGE SCALE ANALYSIS] AT SER-487</scope>
    <scope>IDENTIFICATION BY MASS SPECTROMETRY [LARGE SCALE ANALYSIS]</scope>
    <source>
        <tissue>Cervix carcinoma</tissue>
    </source>
</reference>
<reference key="24">
    <citation type="journal article" date="2009" name="Science">
        <title>Lysine acetylation targets protein complexes and co-regulates major cellular functions.</title>
        <authorList>
            <person name="Choudhary C."/>
            <person name="Kumar C."/>
            <person name="Gnad F."/>
            <person name="Nielsen M.L."/>
            <person name="Rehman M."/>
            <person name="Walther T.C."/>
            <person name="Olsen J.V."/>
            <person name="Mann M."/>
        </authorList>
    </citation>
    <scope>ACETYLATION [LARGE SCALE ANALYSIS] AT LYS-405</scope>
    <scope>IDENTIFICATION BY MASS SPECTROMETRY [LARGE SCALE ANALYSIS]</scope>
</reference>
<reference key="25">
    <citation type="journal article" date="2010" name="Genomics">
        <title>YPEL5 protein of the YPEL gene family is involved in the cell cycle progression by interacting with two distinct proteins RanBPM and RanBP10.</title>
        <authorList>
            <person name="Hosono K."/>
            <person name="Noda S."/>
            <person name="Shimizu A."/>
            <person name="Nakanishi N."/>
            <person name="Ohtsubo M."/>
            <person name="Shimizu N."/>
            <person name="Minoshima S."/>
        </authorList>
    </citation>
    <scope>INTERACTION WITH YPEL5</scope>
</reference>
<reference key="26">
    <citation type="journal article" date="2010" name="Sci. Signal.">
        <title>Quantitative phosphoproteomics reveals widespread full phosphorylation site occupancy during mitosis.</title>
        <authorList>
            <person name="Olsen J.V."/>
            <person name="Vermeulen M."/>
            <person name="Santamaria A."/>
            <person name="Kumar C."/>
            <person name="Miller M.L."/>
            <person name="Jensen L.J."/>
            <person name="Gnad F."/>
            <person name="Cox J."/>
            <person name="Jensen T.S."/>
            <person name="Nigg E.A."/>
            <person name="Brunak S."/>
            <person name="Mann M."/>
        </authorList>
    </citation>
    <scope>IDENTIFICATION BY MASS SPECTROMETRY [LARGE SCALE ANALYSIS]</scope>
    <source>
        <tissue>Cervix carcinoma</tissue>
    </source>
</reference>
<reference key="27">
    <citation type="journal article" date="2011" name="BMC Syst. Biol.">
        <title>Initial characterization of the human central proteome.</title>
        <authorList>
            <person name="Burkard T.R."/>
            <person name="Planyavsky M."/>
            <person name="Kaupe I."/>
            <person name="Breitwieser F.P."/>
            <person name="Buerckstuemmer T."/>
            <person name="Bennett K.L."/>
            <person name="Superti-Furga G."/>
            <person name="Colinge J."/>
        </authorList>
    </citation>
    <scope>IDENTIFICATION BY MASS SPECTROMETRY [LARGE SCALE ANALYSIS]</scope>
</reference>
<reference key="28">
    <citation type="journal article" date="2013" name="J. Proteome Res.">
        <title>Toward a comprehensive characterization of a human cancer cell phosphoproteome.</title>
        <authorList>
            <person name="Zhou H."/>
            <person name="Di Palma S."/>
            <person name="Preisinger C."/>
            <person name="Peng M."/>
            <person name="Polat A.N."/>
            <person name="Heck A.J."/>
            <person name="Mohammed S."/>
        </authorList>
    </citation>
    <scope>IDENTIFICATION BY MASS SPECTROMETRY [LARGE SCALE ANALYSIS]</scope>
    <source>
        <tissue>Erythroleukemia</tissue>
    </source>
</reference>
<reference key="29">
    <citation type="journal article" date="2013" name="PLoS ONE">
        <title>Molecular phylogeny of a RING E3 ubiquitin ligase, conserved in eukaryotic cells and dominated by homologous components, the muskelin/RanBPM/CTLH complex.</title>
        <authorList>
            <person name="Francis O."/>
            <person name="Han F."/>
            <person name="Adams J.C."/>
        </authorList>
    </citation>
    <scope>SUBCELLULAR LOCATION</scope>
</reference>
<reference key="30">
    <citation type="journal article" date="2018" name="Elife">
        <title>The multi-subunit GID/CTLH E3 ligase promotes proliferation and targets the transcription factor Hbp1 for degradation.</title>
        <authorList>
            <person name="Lampert F."/>
            <person name="Stafa D."/>
            <person name="Goga A."/>
            <person name="Soste M.V."/>
            <person name="Gilberto S."/>
            <person name="Olieric N."/>
            <person name="Picotti P."/>
            <person name="Stoffel M."/>
            <person name="Peter M."/>
        </authorList>
    </citation>
    <scope>FUNCTION</scope>
    <scope>IDENTIFICATION IN THE CTLH COMPLEX</scope>
    <scope>IDENTIFICATION BY MASS SPECTROMETRY</scope>
</reference>
<reference evidence="35 36 37" key="31">
    <citation type="journal article" date="2016" name="J. Mol. Biol.">
        <title>Structural Basis for the Interaction between the IUS-SPRY Domain of RanBPM and DDX-4 in Germ Cell Development.</title>
        <authorList>
            <person name="Hong S.K."/>
            <person name="Kim K.H."/>
            <person name="Song E.J."/>
            <person name="Kim E.E."/>
        </authorList>
    </citation>
    <scope>X-RAY CRYSTALLOGRAPHY (1.51 ANGSTROMS) OF 108-350 IN COMPLEX WITH DDX4 PEPTIDE</scope>
    <scope>INTERACTION WITH DDX4</scope>
</reference>
<feature type="chain" id="PRO_0000097169" description="Ran-binding protein 9">
    <location>
        <begin position="1"/>
        <end position="729"/>
    </location>
</feature>
<feature type="domain" description="B30.2/SPRY" evidence="4">
    <location>
        <begin position="147"/>
        <end position="334"/>
    </location>
</feature>
<feature type="domain" description="LisH" evidence="3">
    <location>
        <begin position="365"/>
        <end position="397"/>
    </location>
</feature>
<feature type="domain" description="CTLH" evidence="2">
    <location>
        <begin position="403"/>
        <end position="460"/>
    </location>
</feature>
<feature type="region of interest" description="Disordered" evidence="5">
    <location>
        <begin position="1"/>
        <end position="137"/>
    </location>
</feature>
<feature type="region of interest" description="Interaction with CALB1" evidence="32">
    <location>
        <begin position="401"/>
        <end position="407"/>
    </location>
</feature>
<feature type="region of interest" description="Disordered" evidence="5">
    <location>
        <begin position="461"/>
        <end position="489"/>
    </location>
</feature>
<feature type="region of interest" description="Interaction with FMR1" evidence="18">
    <location>
        <begin position="615"/>
        <end position="729"/>
    </location>
</feature>
<feature type="compositionally biased region" description="Pro residues" evidence="5">
    <location>
        <begin position="1"/>
        <end position="11"/>
    </location>
</feature>
<feature type="compositionally biased region" description="Low complexity" evidence="5">
    <location>
        <begin position="27"/>
        <end position="49"/>
    </location>
</feature>
<feature type="compositionally biased region" description="Gly residues" evidence="5">
    <location>
        <begin position="50"/>
        <end position="60"/>
    </location>
</feature>
<feature type="compositionally biased region" description="Pro residues" evidence="5">
    <location>
        <begin position="70"/>
        <end position="93"/>
    </location>
</feature>
<feature type="compositionally biased region" description="Low complexity" evidence="5">
    <location>
        <begin position="107"/>
        <end position="126"/>
    </location>
</feature>
<feature type="compositionally biased region" description="Low complexity" evidence="5">
    <location>
        <begin position="473"/>
        <end position="489"/>
    </location>
</feature>
<feature type="modified residue" description="N6-acetyllysine" evidence="39">
    <location>
        <position position="405"/>
    </location>
</feature>
<feature type="modified residue" description="Phosphoserine" evidence="1">
    <location>
        <position position="477"/>
    </location>
</feature>
<feature type="modified residue" description="Phosphoserine" evidence="38">
    <location>
        <position position="487"/>
    </location>
</feature>
<feature type="splice variant" id="VSP_013175" description="In isoform 2." evidence="30">
    <location>
        <begin position="1"/>
        <end position="341"/>
    </location>
</feature>
<feature type="splice variant" id="VSP_056049" description="In isoform 3." evidence="29">
    <location>
        <begin position="1"/>
        <end position="229"/>
    </location>
</feature>
<feature type="sequence conflict" description="In Ref. 5; BAA23216." evidence="32" ref="5">
    <original>P</original>
    <variation>S</variation>
    <location>
        <position position="87"/>
    </location>
</feature>
<feature type="helix" evidence="40">
    <location>
        <begin position="150"/>
        <end position="154"/>
    </location>
</feature>
<feature type="turn" evidence="40">
    <location>
        <begin position="160"/>
        <end position="162"/>
    </location>
</feature>
<feature type="strand" evidence="40">
    <location>
        <begin position="168"/>
        <end position="174"/>
    </location>
</feature>
<feature type="strand" evidence="40">
    <location>
        <begin position="178"/>
        <end position="181"/>
    </location>
</feature>
<feature type="turn" evidence="40">
    <location>
        <begin position="182"/>
        <end position="185"/>
    </location>
</feature>
<feature type="strand" evidence="40">
    <location>
        <begin position="186"/>
        <end position="189"/>
    </location>
</feature>
<feature type="helix" evidence="40">
    <location>
        <begin position="196"/>
        <end position="198"/>
    </location>
</feature>
<feature type="strand" evidence="40">
    <location>
        <begin position="200"/>
        <end position="206"/>
    </location>
</feature>
<feature type="helix" evidence="40">
    <location>
        <begin position="210"/>
        <end position="212"/>
    </location>
</feature>
<feature type="strand" evidence="40">
    <location>
        <begin position="213"/>
        <end position="224"/>
    </location>
</feature>
<feature type="turn" evidence="40">
    <location>
        <begin position="225"/>
        <end position="227"/>
    </location>
</feature>
<feature type="strand" evidence="40">
    <location>
        <begin position="231"/>
        <end position="235"/>
    </location>
</feature>
<feature type="strand" evidence="40">
    <location>
        <begin position="241"/>
        <end position="243"/>
    </location>
</feature>
<feature type="strand" evidence="40">
    <location>
        <begin position="251"/>
        <end position="255"/>
    </location>
</feature>
<feature type="turn" evidence="40">
    <location>
        <begin position="256"/>
        <end position="258"/>
    </location>
</feature>
<feature type="strand" evidence="40">
    <location>
        <begin position="260"/>
        <end position="263"/>
    </location>
</feature>
<feature type="strand" evidence="40">
    <location>
        <begin position="280"/>
        <end position="286"/>
    </location>
</feature>
<feature type="turn" evidence="40">
    <location>
        <begin position="287"/>
        <end position="290"/>
    </location>
</feature>
<feature type="strand" evidence="40">
    <location>
        <begin position="291"/>
        <end position="296"/>
    </location>
</feature>
<feature type="strand" evidence="40">
    <location>
        <begin position="299"/>
        <end position="305"/>
    </location>
</feature>
<feature type="strand" evidence="40">
    <location>
        <begin position="313"/>
        <end position="318"/>
    </location>
</feature>
<feature type="strand" evidence="40">
    <location>
        <begin position="323"/>
        <end position="332"/>
    </location>
</feature>
<feature type="helix" evidence="40">
    <location>
        <begin position="338"/>
        <end position="343"/>
    </location>
</feature>
<feature type="helix" evidence="41">
    <location>
        <begin position="364"/>
        <end position="379"/>
    </location>
</feature>
<feature type="helix" evidence="41">
    <location>
        <begin position="383"/>
        <end position="387"/>
    </location>
</feature>
<feature type="helix" evidence="41">
    <location>
        <begin position="696"/>
        <end position="712"/>
    </location>
</feature>
<feature type="strand" evidence="41">
    <location>
        <begin position="713"/>
        <end position="715"/>
    </location>
</feature>
<feature type="helix" evidence="41">
    <location>
        <begin position="717"/>
        <end position="721"/>
    </location>
</feature>
<feature type="helix" evidence="41">
    <location>
        <begin position="724"/>
        <end position="727"/>
    </location>
</feature>
<keyword id="KW-0002">3D-structure</keyword>
<keyword id="KW-0007">Acetylation</keyword>
<keyword id="KW-0025">Alternative splicing</keyword>
<keyword id="KW-1003">Cell membrane</keyword>
<keyword id="KW-0963">Cytoplasm</keyword>
<keyword id="KW-0472">Membrane</keyword>
<keyword id="KW-0539">Nucleus</keyword>
<keyword id="KW-0597">Phosphoprotein</keyword>
<keyword id="KW-1267">Proteomics identification</keyword>
<keyword id="KW-1185">Reference proteome</keyword>
<keyword id="KW-0832">Ubl conjugation</keyword>
<accession>Q96S59</accession>
<accession>A0PJA2</accession>
<accession>B2R8E1</accession>
<accession>O94764</accession>
<accession>Q6P3T7</accession>
<accession>Q7LBR2</accession>
<accession>Q7Z7F9</accession>
<organism>
    <name type="scientific">Homo sapiens</name>
    <name type="common">Human</name>
    <dbReference type="NCBI Taxonomy" id="9606"/>
    <lineage>
        <taxon>Eukaryota</taxon>
        <taxon>Metazoa</taxon>
        <taxon>Chordata</taxon>
        <taxon>Craniata</taxon>
        <taxon>Vertebrata</taxon>
        <taxon>Euteleostomi</taxon>
        <taxon>Mammalia</taxon>
        <taxon>Eutheria</taxon>
        <taxon>Euarchontoglires</taxon>
        <taxon>Primates</taxon>
        <taxon>Haplorrhini</taxon>
        <taxon>Catarrhini</taxon>
        <taxon>Hominidae</taxon>
        <taxon>Homo</taxon>
    </lineage>
</organism>
<dbReference type="EMBL" id="AB055311">
    <property type="protein sequence ID" value="BAB62525.1"/>
    <property type="molecule type" value="mRNA"/>
</dbReference>
<dbReference type="EMBL" id="AK313334">
    <property type="protein sequence ID" value="BAG36138.1"/>
    <property type="molecule type" value="mRNA"/>
</dbReference>
<dbReference type="EMBL" id="AL441883">
    <property type="status" value="NOT_ANNOTATED_CDS"/>
    <property type="molecule type" value="Genomic_DNA"/>
</dbReference>
<dbReference type="EMBL" id="Z93020">
    <property type="status" value="NOT_ANNOTATED_CDS"/>
    <property type="molecule type" value="Genomic_DNA"/>
</dbReference>
<dbReference type="EMBL" id="BC019886">
    <property type="protein sequence ID" value="AAH19886.1"/>
    <property type="status" value="ALT_SEQ"/>
    <property type="molecule type" value="mRNA"/>
</dbReference>
<dbReference type="EMBL" id="BC052781">
    <property type="protein sequence ID" value="AAH52781.1"/>
    <property type="status" value="ALT_FRAME"/>
    <property type="molecule type" value="mRNA"/>
</dbReference>
<dbReference type="EMBL" id="BC063849">
    <property type="protein sequence ID" value="AAH63849.1"/>
    <property type="molecule type" value="mRNA"/>
</dbReference>
<dbReference type="EMBL" id="AB008515">
    <property type="protein sequence ID" value="BAA23216.1"/>
    <property type="status" value="ALT_INIT"/>
    <property type="molecule type" value="mRNA"/>
</dbReference>
<dbReference type="EMBL" id="AF306510">
    <property type="protein sequence ID" value="AAK15469.1"/>
    <property type="status" value="ALT_INIT"/>
    <property type="molecule type" value="mRNA"/>
</dbReference>
<dbReference type="CCDS" id="CCDS4529.1">
    <molecule id="Q96S59-1"/>
</dbReference>
<dbReference type="RefSeq" id="NP_005484.2">
    <molecule id="Q96S59-1"/>
    <property type="nucleotide sequence ID" value="NM_005493.2"/>
</dbReference>
<dbReference type="RefSeq" id="XP_006715008.1">
    <property type="nucleotide sequence ID" value="XM_006714945.2"/>
</dbReference>
<dbReference type="RefSeq" id="XP_047273988.1">
    <molecule id="Q96S59-3"/>
    <property type="nucleotide sequence ID" value="XM_047418032.1"/>
</dbReference>
<dbReference type="RefSeq" id="XP_054209950.1">
    <molecule id="Q96S59-3"/>
    <property type="nucleotide sequence ID" value="XM_054353975.1"/>
</dbReference>
<dbReference type="PDB" id="5JI7">
    <property type="method" value="X-ray"/>
    <property type="resolution" value="1.51 A"/>
    <property type="chains" value="A=108-350"/>
</dbReference>
<dbReference type="PDB" id="5JI9">
    <property type="method" value="X-ray"/>
    <property type="resolution" value="2.50 A"/>
    <property type="chains" value="A=108-350"/>
</dbReference>
<dbReference type="PDB" id="5JIU">
    <property type="method" value="X-ray"/>
    <property type="resolution" value="2.05 A"/>
    <property type="chains" value="A/B=108-350"/>
</dbReference>
<dbReference type="PDB" id="7NSC">
    <property type="method" value="EM"/>
    <property type="resolution" value="3.30 A"/>
    <property type="chains" value="A=1-729"/>
</dbReference>
<dbReference type="PDBsum" id="5JI7"/>
<dbReference type="PDBsum" id="5JI9"/>
<dbReference type="PDBsum" id="5JIU"/>
<dbReference type="PDBsum" id="7NSC"/>
<dbReference type="EMDB" id="EMD-12564"/>
<dbReference type="SMR" id="Q96S59"/>
<dbReference type="BioGRID" id="115359">
    <property type="interactions" value="461"/>
</dbReference>
<dbReference type="ComplexPortal" id="CPX-7901">
    <property type="entry name" value="GID E3 ubiquitin ligase complex, RMND5B-RANBP9 variant"/>
</dbReference>
<dbReference type="ComplexPortal" id="CPX-876">
    <property type="entry name" value="GID E3 ubiquitin ligase complex, RMND5A-RANBP9 variant"/>
</dbReference>
<dbReference type="CORUM" id="Q96S59"/>
<dbReference type="FunCoup" id="Q96S59">
    <property type="interactions" value="3989"/>
</dbReference>
<dbReference type="IntAct" id="Q96S59">
    <property type="interactions" value="112"/>
</dbReference>
<dbReference type="MINT" id="Q96S59"/>
<dbReference type="STRING" id="9606.ENSP00000011619"/>
<dbReference type="GlyGen" id="Q96S59">
    <property type="glycosylation" value="3 sites, 1 O-linked glycan (1 site)"/>
</dbReference>
<dbReference type="iPTMnet" id="Q96S59"/>
<dbReference type="PhosphoSitePlus" id="Q96S59"/>
<dbReference type="SwissPalm" id="Q96S59"/>
<dbReference type="BioMuta" id="RANBP9"/>
<dbReference type="DMDM" id="61215334"/>
<dbReference type="jPOST" id="Q96S59"/>
<dbReference type="MassIVE" id="Q96S59"/>
<dbReference type="PaxDb" id="9606-ENSP00000011619"/>
<dbReference type="PeptideAtlas" id="Q96S59"/>
<dbReference type="ProteomicsDB" id="3415"/>
<dbReference type="ProteomicsDB" id="78074">
    <molecule id="Q96S59-1"/>
</dbReference>
<dbReference type="ProteomicsDB" id="78075">
    <molecule id="Q96S59-2"/>
</dbReference>
<dbReference type="Pumba" id="Q96S59"/>
<dbReference type="Antibodypedia" id="24991">
    <property type="antibodies" value="275 antibodies from 34 providers"/>
</dbReference>
<dbReference type="DNASU" id="10048"/>
<dbReference type="Ensembl" id="ENST00000011619.6">
    <molecule id="Q96S59-1"/>
    <property type="protein sequence ID" value="ENSP00000011619.3"/>
    <property type="gene ID" value="ENSG00000010017.13"/>
</dbReference>
<dbReference type="GeneID" id="10048"/>
<dbReference type="KEGG" id="hsa:10048"/>
<dbReference type="MANE-Select" id="ENST00000011619.6">
    <property type="protein sequence ID" value="ENSP00000011619.3"/>
    <property type="RefSeq nucleotide sequence ID" value="NM_005493.3"/>
    <property type="RefSeq protein sequence ID" value="NP_005484.2"/>
</dbReference>
<dbReference type="UCSC" id="uc003nbb.3">
    <molecule id="Q96S59-1"/>
    <property type="organism name" value="human"/>
</dbReference>
<dbReference type="AGR" id="HGNC:13727"/>
<dbReference type="CTD" id="10048"/>
<dbReference type="DisGeNET" id="10048"/>
<dbReference type="GeneCards" id="RANBP9"/>
<dbReference type="HGNC" id="HGNC:13727">
    <property type="gene designation" value="RANBP9"/>
</dbReference>
<dbReference type="HPA" id="ENSG00000010017">
    <property type="expression patterns" value="Low tissue specificity"/>
</dbReference>
<dbReference type="MIM" id="603854">
    <property type="type" value="gene"/>
</dbReference>
<dbReference type="neXtProt" id="NX_Q96S59"/>
<dbReference type="OpenTargets" id="ENSG00000010017"/>
<dbReference type="PharmGKB" id="PA34215"/>
<dbReference type="VEuPathDB" id="HostDB:ENSG00000010017"/>
<dbReference type="eggNOG" id="KOG1477">
    <property type="taxonomic scope" value="Eukaryota"/>
</dbReference>
<dbReference type="GeneTree" id="ENSGT00940000157305"/>
<dbReference type="HOGENOM" id="CLU_009129_4_0_1"/>
<dbReference type="InParanoid" id="Q96S59"/>
<dbReference type="OMA" id="YGQQLRM"/>
<dbReference type="OrthoDB" id="25503at2759"/>
<dbReference type="PAN-GO" id="Q96S59">
    <property type="GO annotations" value="3 GO annotations based on evolutionary models"/>
</dbReference>
<dbReference type="PhylomeDB" id="Q96S59"/>
<dbReference type="TreeFam" id="TF331658"/>
<dbReference type="PathwayCommons" id="Q96S59"/>
<dbReference type="Reactome" id="R-HSA-373760">
    <property type="pathway name" value="L1CAM interactions"/>
</dbReference>
<dbReference type="Reactome" id="R-HSA-5673001">
    <property type="pathway name" value="RAF/MAP kinase cascade"/>
</dbReference>
<dbReference type="Reactome" id="R-HSA-8851805">
    <property type="pathway name" value="MET activates RAS signaling"/>
</dbReference>
<dbReference type="Reactome" id="R-HSA-9861718">
    <property type="pathway name" value="Regulation of pyruvate metabolism"/>
</dbReference>
<dbReference type="SignaLink" id="Q96S59"/>
<dbReference type="SIGNOR" id="Q96S59"/>
<dbReference type="BioGRID-ORCS" id="10048">
    <property type="hits" value="54 hits in 1161 CRISPR screens"/>
</dbReference>
<dbReference type="CD-CODE" id="8C2F96ED">
    <property type="entry name" value="Centrosome"/>
</dbReference>
<dbReference type="ChiTaRS" id="RANBP9">
    <property type="organism name" value="human"/>
</dbReference>
<dbReference type="GeneWiki" id="RANBP9"/>
<dbReference type="GenomeRNAi" id="10048"/>
<dbReference type="Pharos" id="Q96S59">
    <property type="development level" value="Tbio"/>
</dbReference>
<dbReference type="PRO" id="PR:Q96S59"/>
<dbReference type="Proteomes" id="UP000005640">
    <property type="component" value="Chromosome 6"/>
</dbReference>
<dbReference type="RNAct" id="Q96S59">
    <property type="molecule type" value="protein"/>
</dbReference>
<dbReference type="Bgee" id="ENSG00000010017">
    <property type="expression patterns" value="Expressed in sperm and 208 other cell types or tissues"/>
</dbReference>
<dbReference type="ExpressionAtlas" id="Q96S59">
    <property type="expression patterns" value="baseline and differential"/>
</dbReference>
<dbReference type="GO" id="GO:0005737">
    <property type="term" value="C:cytoplasm"/>
    <property type="evidence" value="ECO:0000314"/>
    <property type="project" value="UniProtKB"/>
</dbReference>
<dbReference type="GO" id="GO:0005829">
    <property type="term" value="C:cytosol"/>
    <property type="evidence" value="ECO:0000314"/>
    <property type="project" value="HPA"/>
</dbReference>
<dbReference type="GO" id="GO:0005875">
    <property type="term" value="C:microtubule associated complex"/>
    <property type="evidence" value="ECO:0000304"/>
    <property type="project" value="ProtInc"/>
</dbReference>
<dbReference type="GO" id="GO:0016604">
    <property type="term" value="C:nuclear body"/>
    <property type="evidence" value="ECO:0000314"/>
    <property type="project" value="HPA"/>
</dbReference>
<dbReference type="GO" id="GO:0005654">
    <property type="term" value="C:nucleoplasm"/>
    <property type="evidence" value="ECO:0000314"/>
    <property type="project" value="HPA"/>
</dbReference>
<dbReference type="GO" id="GO:0005634">
    <property type="term" value="C:nucleus"/>
    <property type="evidence" value="ECO:0000314"/>
    <property type="project" value="UniProtKB"/>
</dbReference>
<dbReference type="GO" id="GO:0005886">
    <property type="term" value="C:plasma membrane"/>
    <property type="evidence" value="ECO:0007669"/>
    <property type="project" value="UniProtKB-SubCell"/>
</dbReference>
<dbReference type="GO" id="GO:0000151">
    <property type="term" value="C:ubiquitin ligase complex"/>
    <property type="evidence" value="ECO:0000314"/>
    <property type="project" value="UniProtKB"/>
</dbReference>
<dbReference type="GO" id="GO:0019899">
    <property type="term" value="F:enzyme binding"/>
    <property type="evidence" value="ECO:0000353"/>
    <property type="project" value="UniProtKB"/>
</dbReference>
<dbReference type="GO" id="GO:0031267">
    <property type="term" value="F:small GTPase binding"/>
    <property type="evidence" value="ECO:0000304"/>
    <property type="project" value="ProtInc"/>
</dbReference>
<dbReference type="GO" id="GO:0007010">
    <property type="term" value="P:cytoskeleton organization"/>
    <property type="evidence" value="ECO:0000318"/>
    <property type="project" value="GO_Central"/>
</dbReference>
<dbReference type="GO" id="GO:0007020">
    <property type="term" value="P:microtubule nucleation"/>
    <property type="evidence" value="ECO:0000304"/>
    <property type="project" value="ProtInc"/>
</dbReference>
<dbReference type="GO" id="GO:0070373">
    <property type="term" value="P:negative regulation of ERK1 and ERK2 cascade"/>
    <property type="evidence" value="ECO:0000315"/>
    <property type="project" value="CACAO"/>
</dbReference>
<dbReference type="GO" id="GO:1902993">
    <property type="term" value="P:positive regulation of amyloid precursor protein catabolic process"/>
    <property type="evidence" value="ECO:0000250"/>
    <property type="project" value="ARUK-UCL"/>
</dbReference>
<dbReference type="GO" id="GO:0065003">
    <property type="term" value="P:protein-containing complex assembly"/>
    <property type="evidence" value="ECO:0000304"/>
    <property type="project" value="ProtInc"/>
</dbReference>
<dbReference type="CDD" id="cd12909">
    <property type="entry name" value="SPRY_RanBP9_10"/>
    <property type="match status" value="1"/>
</dbReference>
<dbReference type="FunFam" id="2.60.120.920:FF:000011">
    <property type="entry name" value="RAN binding protein 10"/>
    <property type="match status" value="1"/>
</dbReference>
<dbReference type="Gene3D" id="2.60.120.920">
    <property type="match status" value="1"/>
</dbReference>
<dbReference type="IDEAL" id="IID00733"/>
<dbReference type="InterPro" id="IPR001870">
    <property type="entry name" value="B30.2/SPRY"/>
</dbReference>
<dbReference type="InterPro" id="IPR043136">
    <property type="entry name" value="B30.2/SPRY_sf"/>
</dbReference>
<dbReference type="InterPro" id="IPR013320">
    <property type="entry name" value="ConA-like_dom_sf"/>
</dbReference>
<dbReference type="InterPro" id="IPR013144">
    <property type="entry name" value="CRA_dom"/>
</dbReference>
<dbReference type="InterPro" id="IPR024964">
    <property type="entry name" value="CTLH/CRA"/>
</dbReference>
<dbReference type="InterPro" id="IPR006595">
    <property type="entry name" value="CTLH_C"/>
</dbReference>
<dbReference type="InterPro" id="IPR006594">
    <property type="entry name" value="LisH"/>
</dbReference>
<dbReference type="InterPro" id="IPR003877">
    <property type="entry name" value="SPRY_dom"/>
</dbReference>
<dbReference type="InterPro" id="IPR035782">
    <property type="entry name" value="SPRY_RanBP9/10"/>
</dbReference>
<dbReference type="InterPro" id="IPR050618">
    <property type="entry name" value="Ubq-SigPath_Reg"/>
</dbReference>
<dbReference type="PANTHER" id="PTHR12864">
    <property type="entry name" value="RAN BINDING PROTEIN 9-RELATED"/>
    <property type="match status" value="1"/>
</dbReference>
<dbReference type="Pfam" id="PF10607">
    <property type="entry name" value="CTLH"/>
    <property type="match status" value="2"/>
</dbReference>
<dbReference type="Pfam" id="PF08513">
    <property type="entry name" value="LisH"/>
    <property type="match status" value="1"/>
</dbReference>
<dbReference type="Pfam" id="PF00622">
    <property type="entry name" value="SPRY"/>
    <property type="match status" value="1"/>
</dbReference>
<dbReference type="SMART" id="SM00757">
    <property type="entry name" value="CRA"/>
    <property type="match status" value="1"/>
</dbReference>
<dbReference type="SMART" id="SM00668">
    <property type="entry name" value="CTLH"/>
    <property type="match status" value="1"/>
</dbReference>
<dbReference type="SMART" id="SM00667">
    <property type="entry name" value="LisH"/>
    <property type="match status" value="1"/>
</dbReference>
<dbReference type="SMART" id="SM00449">
    <property type="entry name" value="SPRY"/>
    <property type="match status" value="1"/>
</dbReference>
<dbReference type="SUPFAM" id="SSF49899">
    <property type="entry name" value="Concanavalin A-like lectins/glucanases"/>
    <property type="match status" value="1"/>
</dbReference>
<dbReference type="SUPFAM" id="SSF101447">
    <property type="entry name" value="Formin homology 2 domain (FH2 domain)"/>
    <property type="match status" value="1"/>
</dbReference>
<dbReference type="PROSITE" id="PS50188">
    <property type="entry name" value="B302_SPRY"/>
    <property type="match status" value="1"/>
</dbReference>
<dbReference type="PROSITE" id="PS50897">
    <property type="entry name" value="CTLH"/>
    <property type="match status" value="1"/>
</dbReference>
<dbReference type="PROSITE" id="PS50896">
    <property type="entry name" value="LISH"/>
    <property type="match status" value="1"/>
</dbReference>
<gene>
    <name type="primary">RANBP9</name>
    <name type="synonym">RANBPM</name>
</gene>
<proteinExistence type="evidence at protein level"/>
<comment type="function">
    <text evidence="8 10 14 17 18 19 21 22 26 32">May act as scaffolding protein, and as adapter protein to couple membrane receptors to intracellular signaling pathways (Probable). Acts as a mediator of cell spreading and actin cytoskeleton rearrangement (PubMed:18710924). Core component of the CTLH E3 ubiquitin-protein ligase complex that selectively accepts ubiquitin from UBE2H and mediates ubiquitination and subsequent proteasomal degradation of the transcription factor HBP1 (PubMed:29911972). May be involved in signaling of ITGB2/LFA-1 and other integrins (PubMed:14722085). Enhances HGF-MET signaling by recruiting Sos and activating the Ras pathway (PubMed:12147692). Enhances dihydrotestosterone-induced transactivation activity of AR, as well as dexamethasone-induced transactivation activity of NR3C1, but not affect estrogen-induced transactivation (PubMed:12361945, PubMed:18222118). Stabilizes TP73 isoform Alpha, probably by inhibiting its ubiquitination, and increases its proapoptotic activity (PubMed:15558019). Inhibits the kinase activity of DYRK1A and DYRK1B. Inhibits FMR1 binding to RNA.</text>
</comment>
<comment type="subunit">
    <text evidence="1 6 7 8 9 10 11 12 13 14 15 16 17 18 19 20 21 22 23 25 26 27">Part of a complex consisting of RANBP9, MKLN1 and GID8 (PubMed:12559565). Identified in the CTLH complex that contains GID4, RANBP9 and/or RANBP10, MKLN1, MAEA, RMND5A (or alternatively its paralog RMND5B), GID8, ARMC8, WDR26 and YPEL5 (PubMed:17467196, PubMed:29911972). Within this complex, MAEA, RMND5A (or alternatively its paralog RMND5B), GID8, WDR26, and RANBP9 and/or RANBP10 form the catalytic core, while GID4, MKLN1, ARMC8 and YPEL5 have ancillary roles (PubMed:29911972). Interacts with GTP-bound Ran, AR, CDC2L1/p110C, CALB1, S100A7, USP11, MKLN1, SOS1 or SOS2, GID8, and FMR1 (PubMed:11470507, PubMed:12084015, PubMed:12147692, PubMed:12361945, PubMed:12421467, PubMed:12684061, PubMed:14511641, PubMed:14684163, PubMed:15381419, PubMed:18710924, PubMed:9817760). Interacts with the Dyrk kinases HIPK2, DYRK1A, and DYRK1B (PubMed:12220523, PubMed:14500717). Interacts with TP73 isoform Alpha but not with TP53 (PubMed:15558019). Interacts with the HGF receptor MET and the integrins ITGB1 and ITGB2, but not with ITGAL (PubMed:14722085). Part of a complex consisting of RANBP9, RAN, DYRK1B and COPS5 (PubMed:14500717). Directly interacts with RANBP10 (PubMed:18222118). Interacts with YPEL5 (PubMed:20580816). Interacts with DDX4 (PubMed:27622290). Interacts with NGFR (By similarity). Interacts with TEX19 (By similarity).</text>
</comment>
<comment type="interaction">
    <interactant intactId="EBI-636085">
        <id>Q96S59</id>
    </interactant>
    <interactant intactId="EBI-77613">
        <id>P05067</id>
        <label>APP</label>
    </interactant>
    <organismsDiffer>false</organismsDiffer>
    <experiments>3</experiments>
</comment>
<comment type="interaction">
    <interactant intactId="EBI-636085">
        <id>Q96S59</id>
    </interactant>
    <interactant intactId="EBI-529989">
        <id>Q9NRI5</id>
        <label>DISC1</label>
    </interactant>
    <organismsDiffer>false</organismsDiffer>
    <experiments>7</experiments>
</comment>
<comment type="interaction">
    <interactant intactId="EBI-636085">
        <id>Q96S59</id>
    </interactant>
    <interactant intactId="EBI-634187">
        <id>Q9Y463</id>
        <label>DYRK1B</label>
    </interactant>
    <organismsDiffer>false</organismsDiffer>
    <experiments>4</experiments>
</comment>
<comment type="interaction">
    <interactant intactId="EBI-636085">
        <id>Q96S59</id>
    </interactant>
    <interactant intactId="EBI-8074749">
        <id>P49961</id>
        <label>ENTPD1</label>
    </interactant>
    <organismsDiffer>false</organismsDiffer>
    <experiments>5</experiments>
</comment>
<comment type="interaction">
    <interactant intactId="EBI-636085">
        <id>Q96S59</id>
    </interactant>
    <interactant intactId="EBI-2624570">
        <id>P35372</id>
        <label>OPRM1</label>
    </interactant>
    <organismsDiffer>false</organismsDiffer>
    <experiments>5</experiments>
</comment>
<comment type="interaction">
    <interactant intactId="EBI-636085">
        <id>Q96S59</id>
    </interactant>
    <interactant intactId="EBI-3964623">
        <id>P36873-2</id>
        <label>PPP1CC</label>
    </interactant>
    <organismsDiffer>false</organismsDiffer>
    <experiments>3</experiments>
</comment>
<comment type="interaction">
    <interactant intactId="EBI-636085">
        <id>Q96S59</id>
    </interactant>
    <interactant intactId="EBI-357520">
        <id>P31151</id>
        <label>S100A7</label>
    </interactant>
    <organismsDiffer>false</organismsDiffer>
    <experiments>3</experiments>
</comment>
<comment type="interaction">
    <interactant intactId="EBI-636085">
        <id>Q96S59</id>
    </interactant>
    <interactant intactId="EBI-7090147">
        <id>P31421</id>
        <label>Grm2</label>
    </interactant>
    <organismsDiffer>true</organismsDiffer>
    <experiments>4</experiments>
</comment>
<comment type="subcellular location">
    <subcellularLocation>
        <location evidence="6 15 18 19 20 21 24">Cytoplasm</location>
    </subcellularLocation>
    <subcellularLocation>
        <location evidence="6 15 18 19 20 21">Nucleus</location>
    </subcellularLocation>
    <subcellularLocation>
        <location evidence="17">Cell membrane</location>
        <topology evidence="17">Peripheral membrane protein</topology>
    </subcellularLocation>
    <text evidence="17">The unphosphorylated form is predominantly cytoplasmic. A phosphorylated form is associated with the plasma membrane.</text>
</comment>
<comment type="alternative products">
    <event type="alternative splicing"/>
    <isoform>
        <id>Q96S59-1</id>
        <name>1</name>
        <sequence type="displayed"/>
    </isoform>
    <isoform>
        <id>Q96S59-2</id>
        <name>2</name>
        <sequence type="described" ref="VSP_013175"/>
    </isoform>
    <isoform>
        <id>Q96S59-3</id>
        <name>3</name>
        <sequence type="described" ref="VSP_056049"/>
    </isoform>
</comment>
<comment type="tissue specificity">
    <text evidence="8 10 18">Ubiquitously expressed, with highest levels in testes, placenta, heart, and muscle, and lowest levels in lung. Within the brain, expressed predominantly by neurons in the gray matter of cortex, the granular layer of cerebellum and the Purkinje cells.</text>
</comment>
<comment type="domain">
    <text>The SPRY domain mediates the interaction with MET, AR, and CDC2L1.</text>
</comment>
<comment type="PTM">
    <text evidence="15 17">Phosphorylated in response to stress. Can be phosphorylated by the cleaved p110 form of CDC2L1 (p110C).</text>
</comment>
<comment type="PTM">
    <text evidence="7">Ubiquitinated. Polyubiquitination targets the protein for rapid degradation via the ubiquitin system. Can be deubiquitinated by USP11.</text>
</comment>
<comment type="similarity">
    <text evidence="32">Belongs to the RANBP9/10 family.</text>
</comment>
<comment type="caution">
    <text evidence="33 34">According to some authors RANBP9 is located in centrosomes and involved in microtubule assembly. Other authors infirmed these results.</text>
</comment>
<comment type="sequence caution" evidence="32">
    <conflict type="miscellaneous discrepancy">
        <sequence resource="EMBL-CDS" id="AAH19886"/>
    </conflict>
    <text>Contaminating sequence. Potential poly-A sequence.</text>
</comment>
<comment type="sequence caution" evidence="32">
    <conflict type="frameshift">
        <sequence resource="EMBL-CDS" id="AAH52781"/>
    </conflict>
</comment>
<comment type="sequence caution" evidence="32">
    <conflict type="erroneous initiation">
        <sequence resource="EMBL-CDS" id="AAK15469"/>
    </conflict>
    <text>Truncated N-terminus.</text>
</comment>
<comment type="sequence caution" evidence="32">
    <conflict type="erroneous initiation">
        <sequence resource="EMBL-CDS" id="BAA23216"/>
    </conflict>
    <text>Truncated N-terminus.</text>
</comment>
<comment type="online information" name="Atlas of Genetics and Cytogenetics in Oncology and Haematology">
    <link uri="https://atlasgeneticsoncology.org/gene/42040/RANBP9"/>
</comment>
<name>RANB9_HUMAN</name>
<protein>
    <recommendedName>
        <fullName>Ran-binding protein 9</fullName>
        <shortName>RanBP9</shortName>
    </recommendedName>
    <alternativeName>
        <fullName>BPM-L</fullName>
    </alternativeName>
    <alternativeName>
        <fullName>BPM90</fullName>
    </alternativeName>
    <alternativeName>
        <fullName>Ran-binding protein M</fullName>
        <shortName evidence="28 31">RanBPM</shortName>
    </alternativeName>
    <alternativeName>
        <fullName>RanBP7</fullName>
    </alternativeName>
</protein>
<sequence length="729" mass="77847">MSGQPPPPPPQQQQQQQQLSPPPPAALAPVSGVVLPAPPAVSAGSSPAGSPGGGAGGEGLGAAAAALLLHPPPPPPPATAAPPPPPPPPPPPASAAAPASGPPAPPGLAAGPGPAGGAPTPALVAGSSAAAPFPHGDSALNEQEKELQRRLKRLYPAVDEQETPLPRSWSPKDKFSYIGLSQNNLRVHYKGHGKTPKDAASVRATHPIPAACGIYYFEVKIVSKGRDGYMGIGLSAQGVNMNRLPGWDKHSYGYHGDDGHSFCSSGTGQPYGPTFTTGDVIGCCVNLINNTCFYTKNGHSLGIAFTDLPPNLYPTVGLQTPGEVVDANFGQHPFVFDIEDYMREWRTKIQAQIDRFPIGDREGEWQTMIQKMVSSYLVHHGYCATAEAFARSTDQTVLEELASIKNRQRIQKLVLAGRMGEAIETTQQLYPSLLERNPNLLFTLKVRQFIEMVNGTDSEVRCLGGRSPKSQDSYPVSPRPFSSPSMSPSHGMNIHNLASGKGSTAHFSGFESCSNGVISNKAHQSYCHSNKHQSSNLNVPELNSINMSRSQQVNNFTSNDVDMETDHYSNGVGETSSNGFLNGSSKHDHEMEDCDTEMEVDSSQLRRQLCGGSQAAIERMIHFGRELQAMSEQLRRDCGKNTANKKMLKDAFSLLAYSDPWNSPVGNQLDPIQREPVCSALNSAILETHNLPKQPPLALAMGQATQCLGLMARSGIGSCAFATVEDYLH</sequence>
<evidence type="ECO:0000250" key="1">
    <source>
        <dbReference type="UniProtKB" id="P69566"/>
    </source>
</evidence>
<evidence type="ECO:0000255" key="2">
    <source>
        <dbReference type="PROSITE-ProRule" id="PRU00058"/>
    </source>
</evidence>
<evidence type="ECO:0000255" key="3">
    <source>
        <dbReference type="PROSITE-ProRule" id="PRU00126"/>
    </source>
</evidence>
<evidence type="ECO:0000255" key="4">
    <source>
        <dbReference type="PROSITE-ProRule" id="PRU00548"/>
    </source>
</evidence>
<evidence type="ECO:0000256" key="5">
    <source>
        <dbReference type="SAM" id="MobiDB-lite"/>
    </source>
</evidence>
<evidence type="ECO:0000269" key="6">
    <source>
    </source>
</evidence>
<evidence type="ECO:0000269" key="7">
    <source>
    </source>
</evidence>
<evidence type="ECO:0000269" key="8">
    <source>
    </source>
</evidence>
<evidence type="ECO:0000269" key="9">
    <source>
    </source>
</evidence>
<evidence type="ECO:0000269" key="10">
    <source>
    </source>
</evidence>
<evidence type="ECO:0000269" key="11">
    <source>
    </source>
</evidence>
<evidence type="ECO:0000269" key="12">
    <source>
    </source>
</evidence>
<evidence type="ECO:0000269" key="13">
    <source>
    </source>
</evidence>
<evidence type="ECO:0000269" key="14">
    <source>
    </source>
</evidence>
<evidence type="ECO:0000269" key="15">
    <source>
    </source>
</evidence>
<evidence type="ECO:0000269" key="16">
    <source>
    </source>
</evidence>
<evidence type="ECO:0000269" key="17">
    <source>
    </source>
</evidence>
<evidence type="ECO:0000269" key="18">
    <source>
    </source>
</evidence>
<evidence type="ECO:0000269" key="19">
    <source>
    </source>
</evidence>
<evidence type="ECO:0000269" key="20">
    <source>
    </source>
</evidence>
<evidence type="ECO:0000269" key="21">
    <source>
    </source>
</evidence>
<evidence type="ECO:0000269" key="22">
    <source>
    </source>
</evidence>
<evidence type="ECO:0000269" key="23">
    <source>
    </source>
</evidence>
<evidence type="ECO:0000269" key="24">
    <source>
    </source>
</evidence>
<evidence type="ECO:0000269" key="25">
    <source>
    </source>
</evidence>
<evidence type="ECO:0000269" key="26">
    <source>
    </source>
</evidence>
<evidence type="ECO:0000269" key="27">
    <source>
    </source>
</evidence>
<evidence type="ECO:0000303" key="28">
    <source>
    </source>
</evidence>
<evidence type="ECO:0000303" key="29">
    <source>
    </source>
</evidence>
<evidence type="ECO:0000303" key="30">
    <source>
    </source>
</evidence>
<evidence type="ECO:0000303" key="31">
    <source>
    </source>
</evidence>
<evidence type="ECO:0000305" key="32"/>
<evidence type="ECO:0000305" key="33">
    <source>
    </source>
</evidence>
<evidence type="ECO:0000305" key="34">
    <source>
    </source>
</evidence>
<evidence type="ECO:0007744" key="35">
    <source>
        <dbReference type="PDB" id="5JI7"/>
    </source>
</evidence>
<evidence type="ECO:0007744" key="36">
    <source>
        <dbReference type="PDB" id="5JI9"/>
    </source>
</evidence>
<evidence type="ECO:0007744" key="37">
    <source>
        <dbReference type="PDB" id="5JIU"/>
    </source>
</evidence>
<evidence type="ECO:0007744" key="38">
    <source>
    </source>
</evidence>
<evidence type="ECO:0007744" key="39">
    <source>
    </source>
</evidence>
<evidence type="ECO:0007829" key="40">
    <source>
        <dbReference type="PDB" id="5JI7"/>
    </source>
</evidence>
<evidence type="ECO:0007829" key="41">
    <source>
        <dbReference type="PDB" id="7NSC"/>
    </source>
</evidence>